<keyword id="KW-0150">Chloroplast</keyword>
<keyword id="KW-0275">Fatty acid biosynthesis</keyword>
<keyword id="KW-0276">Fatty acid metabolism</keyword>
<keyword id="KW-0444">Lipid biosynthesis</keyword>
<keyword id="KW-0443">Lipid metabolism</keyword>
<keyword id="KW-0596">Phosphopantetheine</keyword>
<keyword id="KW-0597">Phosphoprotein</keyword>
<keyword id="KW-0934">Plastid</keyword>
<keyword id="KW-0809">Transit peptide</keyword>
<sequence>MASVTGTSISMASFKASLAPSRVSNLRSVSLPIKGKSFAPLRMRSARFVVCCAAKPETVEKVCAIVKKQLALPDDSAVTGESKFATLGADSLDTVEIVMGLEEEFGINVEEESAQSIATVQDAADLIEKLIEKKSG</sequence>
<proteinExistence type="evidence at transcript level"/>
<reference key="1">
    <citation type="online journal article" date="1998" name="Plant Gene Register">
        <title>cDNA sequence for an acyl carrier protein from actinorhizal nodules of Casuarina glauca.</title>
        <authorList>
            <person name="Laplaze L."/>
            <person name="Gherbi H."/>
            <person name="Franche C."/>
            <person name="Duhoux E."/>
            <person name="Bogusz D."/>
        </authorList>
        <locator>PGR98-066</locator>
    </citation>
    <scope>NUCLEOTIDE SEQUENCE [MRNA]</scope>
    <source>
        <tissue>Root nodule</tissue>
    </source>
</reference>
<feature type="transit peptide" description="Chloroplast" evidence="2">
    <location>
        <begin position="1"/>
        <end position="52"/>
    </location>
</feature>
<feature type="chain" id="PRO_0000000576" description="Acyl carrier protein 1, chloroplastic">
    <location>
        <begin position="53"/>
        <end position="136"/>
    </location>
</feature>
<feature type="domain" description="Carrier" evidence="3">
    <location>
        <begin position="56"/>
        <end position="131"/>
    </location>
</feature>
<feature type="modified residue" description="O-(pantetheine 4'-phosphoryl)serine" evidence="3">
    <location>
        <position position="91"/>
    </location>
</feature>
<gene>
    <name type="primary">ACP1</name>
</gene>
<accession>P93092</accession>
<organism>
    <name type="scientific">Casuarina glauca</name>
    <name type="common">Swamp oak</name>
    <dbReference type="NCBI Taxonomy" id="3522"/>
    <lineage>
        <taxon>Eukaryota</taxon>
        <taxon>Viridiplantae</taxon>
        <taxon>Streptophyta</taxon>
        <taxon>Embryophyta</taxon>
        <taxon>Tracheophyta</taxon>
        <taxon>Spermatophyta</taxon>
        <taxon>Magnoliopsida</taxon>
        <taxon>eudicotyledons</taxon>
        <taxon>Gunneridae</taxon>
        <taxon>Pentapetalae</taxon>
        <taxon>rosids</taxon>
        <taxon>fabids</taxon>
        <taxon>Fagales</taxon>
        <taxon>Casuarinaceae</taxon>
        <taxon>Casuarina</taxon>
    </lineage>
</organism>
<dbReference type="EMBL" id="Y10994">
    <property type="protein sequence ID" value="CAA71885.1"/>
    <property type="molecule type" value="mRNA"/>
</dbReference>
<dbReference type="PIR" id="T09583">
    <property type="entry name" value="T09583"/>
</dbReference>
<dbReference type="SMR" id="P93092"/>
<dbReference type="UniPathway" id="UPA00094"/>
<dbReference type="GO" id="GO:0009507">
    <property type="term" value="C:chloroplast"/>
    <property type="evidence" value="ECO:0007669"/>
    <property type="project" value="UniProtKB-SubCell"/>
</dbReference>
<dbReference type="GO" id="GO:0000036">
    <property type="term" value="F:acyl carrier activity"/>
    <property type="evidence" value="ECO:0007669"/>
    <property type="project" value="InterPro"/>
</dbReference>
<dbReference type="GO" id="GO:0031177">
    <property type="term" value="F:phosphopantetheine binding"/>
    <property type="evidence" value="ECO:0007669"/>
    <property type="project" value="InterPro"/>
</dbReference>
<dbReference type="FunFam" id="1.10.1200.10:FF:000017">
    <property type="entry name" value="Acyl carrier protein"/>
    <property type="match status" value="1"/>
</dbReference>
<dbReference type="Gene3D" id="1.10.1200.10">
    <property type="entry name" value="ACP-like"/>
    <property type="match status" value="1"/>
</dbReference>
<dbReference type="HAMAP" id="MF_01217">
    <property type="entry name" value="Acyl_carrier"/>
    <property type="match status" value="1"/>
</dbReference>
<dbReference type="InterPro" id="IPR003231">
    <property type="entry name" value="ACP"/>
</dbReference>
<dbReference type="InterPro" id="IPR036736">
    <property type="entry name" value="ACP-like_sf"/>
</dbReference>
<dbReference type="InterPro" id="IPR044813">
    <property type="entry name" value="ACP_chloroplastic"/>
</dbReference>
<dbReference type="InterPro" id="IPR020806">
    <property type="entry name" value="PKS_PP-bd"/>
</dbReference>
<dbReference type="InterPro" id="IPR009081">
    <property type="entry name" value="PP-bd_ACP"/>
</dbReference>
<dbReference type="InterPro" id="IPR006162">
    <property type="entry name" value="Ppantetheine_attach_site"/>
</dbReference>
<dbReference type="NCBIfam" id="TIGR00517">
    <property type="entry name" value="acyl_carrier"/>
    <property type="match status" value="1"/>
</dbReference>
<dbReference type="NCBIfam" id="NF002148">
    <property type="entry name" value="PRK00982.1-2"/>
    <property type="match status" value="1"/>
</dbReference>
<dbReference type="PANTHER" id="PTHR46153">
    <property type="entry name" value="ACYL CARRIER PROTEIN"/>
    <property type="match status" value="1"/>
</dbReference>
<dbReference type="PANTHER" id="PTHR46153:SF29">
    <property type="entry name" value="ACYL CARRIER PROTEIN"/>
    <property type="match status" value="1"/>
</dbReference>
<dbReference type="Pfam" id="PF00550">
    <property type="entry name" value="PP-binding"/>
    <property type="match status" value="1"/>
</dbReference>
<dbReference type="SMART" id="SM00823">
    <property type="entry name" value="PKS_PP"/>
    <property type="match status" value="1"/>
</dbReference>
<dbReference type="SUPFAM" id="SSF47336">
    <property type="entry name" value="ACP-like"/>
    <property type="match status" value="1"/>
</dbReference>
<dbReference type="PROSITE" id="PS50075">
    <property type="entry name" value="CARRIER"/>
    <property type="match status" value="1"/>
</dbReference>
<dbReference type="PROSITE" id="PS00012">
    <property type="entry name" value="PHOSPHOPANTETHEINE"/>
    <property type="match status" value="1"/>
</dbReference>
<evidence type="ECO:0000250" key="1"/>
<evidence type="ECO:0000255" key="2"/>
<evidence type="ECO:0000255" key="3">
    <source>
        <dbReference type="PROSITE-ProRule" id="PRU00258"/>
    </source>
</evidence>
<evidence type="ECO:0000305" key="4"/>
<name>ACP1_CASGL</name>
<protein>
    <recommendedName>
        <fullName>Acyl carrier protein 1, chloroplastic</fullName>
        <shortName>ACP 1</shortName>
    </recommendedName>
</protein>
<comment type="function">
    <text>Carrier of the growing fatty acid chain in fatty acid biosynthesis.</text>
</comment>
<comment type="pathway">
    <text>Lipid metabolism; fatty acid biosynthesis.</text>
</comment>
<comment type="subcellular location">
    <subcellularLocation>
        <location>Plastid</location>
        <location>Chloroplast</location>
    </subcellularLocation>
</comment>
<comment type="PTM">
    <text evidence="1">4'-phosphopantetheine is transferred from CoA to a specific serine of apo-ACP by acpS. This modification is essential for activity because fatty acids are bound in thioester linkage to the sulfhydryl of the prosthetic group (By similarity).</text>
</comment>
<comment type="similarity">
    <text evidence="4">Belongs to the acyl carrier protein (ACP) family.</text>
</comment>